<accession>Q873N1</accession>
<accession>Q4WRW4</accession>
<comment type="function">
    <text evidence="1">Probable acetyltransferase, which acetylates the inositol ring of phosphatidylinositol during biosynthesis of GPI-anchor.</text>
</comment>
<comment type="pathway">
    <text>Glycolipid biosynthesis; glycosylphosphatidylinositol-anchor biosynthesis.</text>
</comment>
<comment type="subcellular location">
    <subcellularLocation>
        <location evidence="1">Endoplasmic reticulum membrane</location>
        <topology evidence="1">Multi-pass membrane protein</topology>
    </subcellularLocation>
</comment>
<comment type="similarity">
    <text evidence="4">Belongs to the PIGW family.</text>
</comment>
<protein>
    <recommendedName>
        <fullName>GPI-anchored wall transfer protein 1</fullName>
        <ecNumber>2.3.-.-</ecNumber>
    </recommendedName>
</protein>
<dbReference type="EC" id="2.3.-.-"/>
<dbReference type="EMBL" id="AB092482">
    <property type="protein sequence ID" value="BAC66175.1"/>
    <property type="molecule type" value="Genomic_DNA"/>
</dbReference>
<dbReference type="EMBL" id="AAHF01000004">
    <property type="protein sequence ID" value="EAL90818.1"/>
    <property type="molecule type" value="Genomic_DNA"/>
</dbReference>
<dbReference type="RefSeq" id="XP_752856.1">
    <property type="nucleotide sequence ID" value="XM_747763.1"/>
</dbReference>
<dbReference type="SMR" id="Q873N1"/>
<dbReference type="FunCoup" id="Q873N1">
    <property type="interactions" value="556"/>
</dbReference>
<dbReference type="STRING" id="330879.Q873N1"/>
<dbReference type="GlyCosmos" id="Q873N1">
    <property type="glycosylation" value="1 site, No reported glycans"/>
</dbReference>
<dbReference type="EnsemblFungi" id="EAL90818">
    <property type="protein sequence ID" value="EAL90818"/>
    <property type="gene ID" value="AFUA_1G14870"/>
</dbReference>
<dbReference type="GeneID" id="3509879"/>
<dbReference type="KEGG" id="afm:AFUA_1G14870"/>
<dbReference type="VEuPathDB" id="FungiDB:Afu1g14870"/>
<dbReference type="eggNOG" id="KOG0411">
    <property type="taxonomic scope" value="Eukaryota"/>
</dbReference>
<dbReference type="HOGENOM" id="CLU_020802_2_2_1"/>
<dbReference type="InParanoid" id="Q873N1"/>
<dbReference type="OMA" id="GLYVMQP"/>
<dbReference type="OrthoDB" id="15270at2759"/>
<dbReference type="UniPathway" id="UPA00196"/>
<dbReference type="Proteomes" id="UP000002530">
    <property type="component" value="Chromosome 1"/>
</dbReference>
<dbReference type="GO" id="GO:0005789">
    <property type="term" value="C:endoplasmic reticulum membrane"/>
    <property type="evidence" value="ECO:0007669"/>
    <property type="project" value="UniProtKB-SubCell"/>
</dbReference>
<dbReference type="GO" id="GO:0032216">
    <property type="term" value="F:glucosaminyl-phosphatidylinositol O-acyltransferase activity"/>
    <property type="evidence" value="ECO:0000315"/>
    <property type="project" value="AspGD"/>
</dbReference>
<dbReference type="GO" id="GO:0006506">
    <property type="term" value="P:GPI anchor biosynthetic process"/>
    <property type="evidence" value="ECO:0000315"/>
    <property type="project" value="AspGD"/>
</dbReference>
<dbReference type="InterPro" id="IPR009447">
    <property type="entry name" value="PIGW/GWT1"/>
</dbReference>
<dbReference type="PANTHER" id="PTHR20661">
    <property type="entry name" value="PHOSPHATIDYLINOSITOL-GLYCAN BIOSYNTHESIS CLASS W PROTEIN"/>
    <property type="match status" value="1"/>
</dbReference>
<dbReference type="PANTHER" id="PTHR20661:SF0">
    <property type="entry name" value="PHOSPHATIDYLINOSITOL-GLYCAN BIOSYNTHESIS CLASS W PROTEIN"/>
    <property type="match status" value="1"/>
</dbReference>
<dbReference type="Pfam" id="PF06423">
    <property type="entry name" value="GWT1"/>
    <property type="match status" value="1"/>
</dbReference>
<dbReference type="PIRSF" id="PIRSF017321">
    <property type="entry name" value="GWT1"/>
    <property type="match status" value="1"/>
</dbReference>
<name>GWT1_ASPFU</name>
<organism>
    <name type="scientific">Aspergillus fumigatus (strain ATCC MYA-4609 / CBS 101355 / FGSC A1100 / Af293)</name>
    <name type="common">Neosartorya fumigata</name>
    <dbReference type="NCBI Taxonomy" id="330879"/>
    <lineage>
        <taxon>Eukaryota</taxon>
        <taxon>Fungi</taxon>
        <taxon>Dikarya</taxon>
        <taxon>Ascomycota</taxon>
        <taxon>Pezizomycotina</taxon>
        <taxon>Eurotiomycetes</taxon>
        <taxon>Eurotiomycetidae</taxon>
        <taxon>Eurotiales</taxon>
        <taxon>Aspergillaceae</taxon>
        <taxon>Aspergillus</taxon>
        <taxon>Aspergillus subgen. Fumigati</taxon>
    </lineage>
</organism>
<gene>
    <name type="primary">gwt1</name>
    <name type="ORF">AFUA_1G14870</name>
</gene>
<reference key="1">
    <citation type="journal article" date="2003" name="Mol. Microbiol.">
        <title>Medicinal genetics approach towards identifying the molecular target of a novel inhibitor of fungal cell wall assembly.</title>
        <authorList>
            <person name="Tsukahara K."/>
            <person name="Hata K."/>
            <person name="Nakamoto K."/>
            <person name="Sagane K."/>
            <person name="Watanabe N.-A."/>
            <person name="Kuromitsu J."/>
            <person name="Kai J."/>
            <person name="Tsuchiya M."/>
            <person name="Ohba F."/>
            <person name="Jigami Y."/>
            <person name="Yoshimatsu K."/>
            <person name="Nagasu T."/>
        </authorList>
    </citation>
    <scope>NUCLEOTIDE SEQUENCE [GENOMIC DNA]</scope>
</reference>
<reference key="2">
    <citation type="journal article" date="2005" name="Nature">
        <title>Genomic sequence of the pathogenic and allergenic filamentous fungus Aspergillus fumigatus.</title>
        <authorList>
            <person name="Nierman W.C."/>
            <person name="Pain A."/>
            <person name="Anderson M.J."/>
            <person name="Wortman J.R."/>
            <person name="Kim H.S."/>
            <person name="Arroyo J."/>
            <person name="Berriman M."/>
            <person name="Abe K."/>
            <person name="Archer D.B."/>
            <person name="Bermejo C."/>
            <person name="Bennett J.W."/>
            <person name="Bowyer P."/>
            <person name="Chen D."/>
            <person name="Collins M."/>
            <person name="Coulsen R."/>
            <person name="Davies R."/>
            <person name="Dyer P.S."/>
            <person name="Farman M.L."/>
            <person name="Fedorova N."/>
            <person name="Fedorova N.D."/>
            <person name="Feldblyum T.V."/>
            <person name="Fischer R."/>
            <person name="Fosker N."/>
            <person name="Fraser A."/>
            <person name="Garcia J.L."/>
            <person name="Garcia M.J."/>
            <person name="Goble A."/>
            <person name="Goldman G.H."/>
            <person name="Gomi K."/>
            <person name="Griffith-Jones S."/>
            <person name="Gwilliam R."/>
            <person name="Haas B.J."/>
            <person name="Haas H."/>
            <person name="Harris D.E."/>
            <person name="Horiuchi H."/>
            <person name="Huang J."/>
            <person name="Humphray S."/>
            <person name="Jimenez J."/>
            <person name="Keller N."/>
            <person name="Khouri H."/>
            <person name="Kitamoto K."/>
            <person name="Kobayashi T."/>
            <person name="Konzack S."/>
            <person name="Kulkarni R."/>
            <person name="Kumagai T."/>
            <person name="Lafton A."/>
            <person name="Latge J.-P."/>
            <person name="Li W."/>
            <person name="Lord A."/>
            <person name="Lu C."/>
            <person name="Majoros W.H."/>
            <person name="May G.S."/>
            <person name="Miller B.L."/>
            <person name="Mohamoud Y."/>
            <person name="Molina M."/>
            <person name="Monod M."/>
            <person name="Mouyna I."/>
            <person name="Mulligan S."/>
            <person name="Murphy L.D."/>
            <person name="O'Neil S."/>
            <person name="Paulsen I."/>
            <person name="Penalva M.A."/>
            <person name="Pertea M."/>
            <person name="Price C."/>
            <person name="Pritchard B.L."/>
            <person name="Quail M.A."/>
            <person name="Rabbinowitsch E."/>
            <person name="Rawlins N."/>
            <person name="Rajandream M.A."/>
            <person name="Reichard U."/>
            <person name="Renauld H."/>
            <person name="Robson G.D."/>
            <person name="Rodriguez de Cordoba S."/>
            <person name="Rodriguez-Pena J.M."/>
            <person name="Ronning C.M."/>
            <person name="Rutter S."/>
            <person name="Salzberg S.L."/>
            <person name="Sanchez M."/>
            <person name="Sanchez-Ferrero J.C."/>
            <person name="Saunders D."/>
            <person name="Seeger K."/>
            <person name="Squares R."/>
            <person name="Squares S."/>
            <person name="Takeuchi M."/>
            <person name="Tekaia F."/>
            <person name="Turner G."/>
            <person name="Vazquez de Aldana C.R."/>
            <person name="Weidman J."/>
            <person name="White O."/>
            <person name="Woodward J.R."/>
            <person name="Yu J.-H."/>
            <person name="Fraser C.M."/>
            <person name="Galagan J.E."/>
            <person name="Asai K."/>
            <person name="Machida M."/>
            <person name="Hall N."/>
            <person name="Barrell B.G."/>
            <person name="Denning D.W."/>
        </authorList>
    </citation>
    <scope>NUCLEOTIDE SEQUENCE [LARGE SCALE GENOMIC DNA]</scope>
    <source>
        <strain>ATCC MYA-4609 / CBS 101355 / FGSC A1100 / Af293</strain>
    </source>
</reference>
<proteinExistence type="inferred from homology"/>
<evidence type="ECO:0000250" key="1"/>
<evidence type="ECO:0000255" key="2"/>
<evidence type="ECO:0000256" key="3">
    <source>
        <dbReference type="SAM" id="MobiDB-lite"/>
    </source>
</evidence>
<evidence type="ECO:0000305" key="4"/>
<feature type="chain" id="PRO_0000215183" description="GPI-anchored wall transfer protein 1">
    <location>
        <begin position="1"/>
        <end position="501"/>
    </location>
</feature>
<feature type="transmembrane region" description="Helical" evidence="2">
    <location>
        <begin position="21"/>
        <end position="41"/>
    </location>
</feature>
<feature type="transmembrane region" description="Helical" evidence="2">
    <location>
        <begin position="53"/>
        <end position="73"/>
    </location>
</feature>
<feature type="transmembrane region" description="Helical" evidence="2">
    <location>
        <begin position="74"/>
        <end position="94"/>
    </location>
</feature>
<feature type="transmembrane region" description="Helical" evidence="2">
    <location>
        <begin position="133"/>
        <end position="153"/>
    </location>
</feature>
<feature type="transmembrane region" description="Helical" evidence="2">
    <location>
        <begin position="168"/>
        <end position="188"/>
    </location>
</feature>
<feature type="transmembrane region" description="Helical" evidence="2">
    <location>
        <begin position="249"/>
        <end position="269"/>
    </location>
</feature>
<feature type="transmembrane region" description="Helical" evidence="2">
    <location>
        <begin position="311"/>
        <end position="331"/>
    </location>
</feature>
<feature type="transmembrane region" description="Helical" evidence="2">
    <location>
        <begin position="351"/>
        <end position="371"/>
    </location>
</feature>
<feature type="transmembrane region" description="Helical" evidence="2">
    <location>
        <begin position="389"/>
        <end position="409"/>
    </location>
</feature>
<feature type="transmembrane region" description="Helical" evidence="2">
    <location>
        <begin position="446"/>
        <end position="466"/>
    </location>
</feature>
<feature type="transmembrane region" description="Helical" evidence="2">
    <location>
        <begin position="471"/>
        <end position="491"/>
    </location>
</feature>
<feature type="region of interest" description="Disordered" evidence="3">
    <location>
        <begin position="101"/>
        <end position="122"/>
    </location>
</feature>
<feature type="glycosylation site" description="N-linked (GlcNAc...) asparagine" evidence="2">
    <location>
        <position position="198"/>
    </location>
</feature>
<feature type="sequence conflict" description="In Ref. 1; BAC66175." evidence="4" ref="1">
    <original>I</original>
    <variation>T</variation>
    <location>
        <position position="197"/>
    </location>
</feature>
<sequence length="501" mass="54677">MDPDYKARKEAFVSGLAGGSILEINAVTLVASVSVFLWSILQSRLSFFTPYSAAALLVDFLLNVLAILFATTLYSSAPLLLNLLLISPALLILLSTKRPRTPVKAKPPRQSARAGKDDSKHATALPESLPIHPFLTTYRAAMMVITCIAILAVDFRIFPRRFAKVENWGTSLMDLGVGSFVFSGGVVSARSLLKSRINGSKRLPLAKRLIASTRHSIPLLVLGLIRLYSVKGLDYAEHVTEYGVHWNFFFTLGLLPPFVEVFDALATIIPSYEVLSVGIAVLYQVALESTDLKSYILVSPRGPSLLSKNREGVFSFSGYLAIFLAGRAIGIRIIPRGTSFSRSPEQARRRVLISLGVQALVWTTLFVLNSTYAMGYGANIPVSRRLANMPYVLWVSAFNTAQLFVFCLIETLCFPAVHRTTTQESESERVDFATSRIMSAFNKNSLAIFLLANLLTGAVNLSISTIDANTAQAIAVLIGYSSIITGVALALHHANIKVLPF</sequence>
<keyword id="KW-0012">Acyltransferase</keyword>
<keyword id="KW-0256">Endoplasmic reticulum</keyword>
<keyword id="KW-0325">Glycoprotein</keyword>
<keyword id="KW-0337">GPI-anchor biosynthesis</keyword>
<keyword id="KW-0472">Membrane</keyword>
<keyword id="KW-1185">Reference proteome</keyword>
<keyword id="KW-0808">Transferase</keyword>
<keyword id="KW-0812">Transmembrane</keyword>
<keyword id="KW-1133">Transmembrane helix</keyword>